<organism>
    <name type="scientific">Bacillus cereus (strain ATCC 10987 / NRS 248)</name>
    <dbReference type="NCBI Taxonomy" id="222523"/>
    <lineage>
        <taxon>Bacteria</taxon>
        <taxon>Bacillati</taxon>
        <taxon>Bacillota</taxon>
        <taxon>Bacilli</taxon>
        <taxon>Bacillales</taxon>
        <taxon>Bacillaceae</taxon>
        <taxon>Bacillus</taxon>
        <taxon>Bacillus cereus group</taxon>
    </lineage>
</organism>
<name>MNTR_BACC1</name>
<sequence>MPTPSMEDYIEQIYLLIDEKGYARVSDIAEALSVHPSSVTKMVQKLDKDEYLIYEKYRGLVLTSKGKKIGERLVYRHELLEQFMRIIGVDESKIYNDVEGIEHHLSWEAIDRIGDLVQYFEQDEVRVETLRGVQKANEEKSN</sequence>
<proteinExistence type="inferred from homology"/>
<feature type="chain" id="PRO_0000285038" description="HTH-type transcriptional regulator MntR">
    <location>
        <begin position="1"/>
        <end position="142"/>
    </location>
</feature>
<feature type="domain" description="HTH dtxR-type" evidence="1">
    <location>
        <begin position="1"/>
        <end position="63"/>
    </location>
</feature>
<feature type="binding site" evidence="1">
    <location>
        <position position="8"/>
    </location>
    <ligand>
        <name>Mn(2+)</name>
        <dbReference type="ChEBI" id="CHEBI:29035"/>
        <label>1</label>
    </ligand>
</feature>
<feature type="binding site" evidence="1">
    <location>
        <position position="11"/>
    </location>
    <ligand>
        <name>Mn(2+)</name>
        <dbReference type="ChEBI" id="CHEBI:29035"/>
        <label>2</label>
    </ligand>
</feature>
<feature type="binding site" evidence="1">
    <location>
        <position position="77"/>
    </location>
    <ligand>
        <name>Mn(2+)</name>
        <dbReference type="ChEBI" id="CHEBI:29035"/>
        <label>2</label>
    </ligand>
</feature>
<feature type="binding site" evidence="1">
    <location>
        <position position="99"/>
    </location>
    <ligand>
        <name>Mn(2+)</name>
        <dbReference type="ChEBI" id="CHEBI:29035"/>
        <label>1</label>
    </ligand>
</feature>
<feature type="binding site" evidence="1">
    <location>
        <position position="99"/>
    </location>
    <ligand>
        <name>Mn(2+)</name>
        <dbReference type="ChEBI" id="CHEBI:29035"/>
        <label>2</label>
    </ligand>
</feature>
<feature type="binding site" evidence="1">
    <location>
        <position position="102"/>
    </location>
    <ligand>
        <name>Mn(2+)</name>
        <dbReference type="ChEBI" id="CHEBI:29035"/>
        <label>1</label>
    </ligand>
</feature>
<feature type="binding site" evidence="1">
    <location>
        <position position="102"/>
    </location>
    <ligand>
        <name>Mn(2+)</name>
        <dbReference type="ChEBI" id="CHEBI:29035"/>
        <label>2</label>
    </ligand>
</feature>
<feature type="binding site" evidence="1">
    <location>
        <position position="103"/>
    </location>
    <ligand>
        <name>Mn(2+)</name>
        <dbReference type="ChEBI" id="CHEBI:29035"/>
        <label>1</label>
    </ligand>
</feature>
<evidence type="ECO:0000255" key="1">
    <source>
        <dbReference type="HAMAP-Rule" id="MF_00732"/>
    </source>
</evidence>
<gene>
    <name evidence="1" type="primary">mntR</name>
    <name type="ordered locus">BCE_4277</name>
</gene>
<reference key="1">
    <citation type="journal article" date="2004" name="Nucleic Acids Res.">
        <title>The genome sequence of Bacillus cereus ATCC 10987 reveals metabolic adaptations and a large plasmid related to Bacillus anthracis pXO1.</title>
        <authorList>
            <person name="Rasko D.A."/>
            <person name="Ravel J."/>
            <person name="Oekstad O.A."/>
            <person name="Helgason E."/>
            <person name="Cer R.Z."/>
            <person name="Jiang L."/>
            <person name="Shores K.A."/>
            <person name="Fouts D.E."/>
            <person name="Tourasse N.J."/>
            <person name="Angiuoli S.V."/>
            <person name="Kolonay J.F."/>
            <person name="Nelson W.C."/>
            <person name="Kolstoe A.-B."/>
            <person name="Fraser C.M."/>
            <person name="Read T.D."/>
        </authorList>
    </citation>
    <scope>NUCLEOTIDE SEQUENCE [LARGE SCALE GENOMIC DNA]</scope>
    <source>
        <strain>ATCC 10987 / NRS 248</strain>
    </source>
</reference>
<protein>
    <recommendedName>
        <fullName evidence="1">HTH-type transcriptional regulator MntR</fullName>
    </recommendedName>
    <alternativeName>
        <fullName evidence="1">Manganese transport regulator</fullName>
    </alternativeName>
</protein>
<keyword id="KW-0010">Activator</keyword>
<keyword id="KW-0963">Cytoplasm</keyword>
<keyword id="KW-0238">DNA-binding</keyword>
<keyword id="KW-0464">Manganese</keyword>
<keyword id="KW-0479">Metal-binding</keyword>
<keyword id="KW-0678">Repressor</keyword>
<keyword id="KW-0804">Transcription</keyword>
<keyword id="KW-0805">Transcription regulation</keyword>
<accession>Q730Y9</accession>
<comment type="function">
    <text evidence="1">Central regulator of manganese homeostasis.</text>
</comment>
<comment type="activity regulation">
    <text evidence="1">DNA binding is strongly activated by Mn(2+).</text>
</comment>
<comment type="subunit">
    <text evidence="1">Homodimer.</text>
</comment>
<comment type="subcellular location">
    <subcellularLocation>
        <location evidence="1">Cytoplasm</location>
    </subcellularLocation>
</comment>
<comment type="similarity">
    <text evidence="1">Belongs to the DtxR/MntR family.</text>
</comment>
<dbReference type="EMBL" id="AE017194">
    <property type="protein sequence ID" value="AAS43178.1"/>
    <property type="molecule type" value="Genomic_DNA"/>
</dbReference>
<dbReference type="SMR" id="Q730Y9"/>
<dbReference type="KEGG" id="bca:BCE_4277"/>
<dbReference type="HOGENOM" id="CLU_069532_3_0_9"/>
<dbReference type="Proteomes" id="UP000002527">
    <property type="component" value="Chromosome"/>
</dbReference>
<dbReference type="GO" id="GO:0005737">
    <property type="term" value="C:cytoplasm"/>
    <property type="evidence" value="ECO:0007669"/>
    <property type="project" value="UniProtKB-SubCell"/>
</dbReference>
<dbReference type="GO" id="GO:0003677">
    <property type="term" value="F:DNA binding"/>
    <property type="evidence" value="ECO:0007669"/>
    <property type="project" value="UniProtKB-KW"/>
</dbReference>
<dbReference type="GO" id="GO:0003700">
    <property type="term" value="F:DNA-binding transcription factor activity"/>
    <property type="evidence" value="ECO:0007669"/>
    <property type="project" value="UniProtKB-UniRule"/>
</dbReference>
<dbReference type="GO" id="GO:0030145">
    <property type="term" value="F:manganese ion binding"/>
    <property type="evidence" value="ECO:0007669"/>
    <property type="project" value="UniProtKB-UniRule"/>
</dbReference>
<dbReference type="GO" id="GO:0046983">
    <property type="term" value="F:protein dimerization activity"/>
    <property type="evidence" value="ECO:0007669"/>
    <property type="project" value="InterPro"/>
</dbReference>
<dbReference type="GO" id="GO:0030026">
    <property type="term" value="P:intracellular manganese ion homeostasis"/>
    <property type="evidence" value="ECO:0007669"/>
    <property type="project" value="UniProtKB-UniRule"/>
</dbReference>
<dbReference type="FunFam" id="1.10.10.10:FF:000189">
    <property type="entry name" value="HTH-type transcriptional regulator MntR"/>
    <property type="match status" value="1"/>
</dbReference>
<dbReference type="FunFam" id="1.10.60.10:FF:000003">
    <property type="entry name" value="HTH-type transcriptional regulator MntR"/>
    <property type="match status" value="1"/>
</dbReference>
<dbReference type="Gene3D" id="1.10.60.10">
    <property type="entry name" value="Iron dependent repressor, metal binding and dimerisation domain"/>
    <property type="match status" value="1"/>
</dbReference>
<dbReference type="Gene3D" id="1.10.10.10">
    <property type="entry name" value="Winged helix-like DNA-binding domain superfamily/Winged helix DNA-binding domain"/>
    <property type="match status" value="1"/>
</dbReference>
<dbReference type="HAMAP" id="MF_00732">
    <property type="entry name" value="HTH_MntR"/>
    <property type="match status" value="1"/>
</dbReference>
<dbReference type="InterPro" id="IPR050536">
    <property type="entry name" value="DtxR_MntR_Metal-Reg"/>
</dbReference>
<dbReference type="InterPro" id="IPR001367">
    <property type="entry name" value="Fe_dep_repressor"/>
</dbReference>
<dbReference type="InterPro" id="IPR036421">
    <property type="entry name" value="Fe_dep_repressor_sf"/>
</dbReference>
<dbReference type="InterPro" id="IPR022687">
    <property type="entry name" value="HTH_DTXR"/>
</dbReference>
<dbReference type="InterPro" id="IPR022897">
    <property type="entry name" value="HTH_tscrpt_reg_MntR"/>
</dbReference>
<dbReference type="InterPro" id="IPR022689">
    <property type="entry name" value="Iron_dep_repressor"/>
</dbReference>
<dbReference type="InterPro" id="IPR036388">
    <property type="entry name" value="WH-like_DNA-bd_sf"/>
</dbReference>
<dbReference type="InterPro" id="IPR036390">
    <property type="entry name" value="WH_DNA-bd_sf"/>
</dbReference>
<dbReference type="NCBIfam" id="NF003025">
    <property type="entry name" value="PRK03902.1"/>
    <property type="match status" value="1"/>
</dbReference>
<dbReference type="PANTHER" id="PTHR33238">
    <property type="entry name" value="IRON (METAL) DEPENDENT REPRESSOR, DTXR FAMILY"/>
    <property type="match status" value="1"/>
</dbReference>
<dbReference type="PANTHER" id="PTHR33238:SF11">
    <property type="entry name" value="TRANSCRIPTIONAL REGULATOR MNTR"/>
    <property type="match status" value="1"/>
</dbReference>
<dbReference type="Pfam" id="PF02742">
    <property type="entry name" value="Fe_dep_repr_C"/>
    <property type="match status" value="1"/>
</dbReference>
<dbReference type="Pfam" id="PF01325">
    <property type="entry name" value="Fe_dep_repress"/>
    <property type="match status" value="1"/>
</dbReference>
<dbReference type="SMART" id="SM00529">
    <property type="entry name" value="HTH_DTXR"/>
    <property type="match status" value="1"/>
</dbReference>
<dbReference type="SUPFAM" id="SSF47979">
    <property type="entry name" value="Iron-dependent repressor protein, dimerization domain"/>
    <property type="match status" value="1"/>
</dbReference>
<dbReference type="SUPFAM" id="SSF46785">
    <property type="entry name" value="Winged helix' DNA-binding domain"/>
    <property type="match status" value="1"/>
</dbReference>
<dbReference type="PROSITE" id="PS50944">
    <property type="entry name" value="HTH_DTXR"/>
    <property type="match status" value="1"/>
</dbReference>